<protein>
    <recommendedName>
        <fullName evidence="6">Cytochrome P450 monooxygenase apf7</fullName>
        <ecNumber evidence="8">1.-.-.-</ecNumber>
    </recommendedName>
    <alternativeName>
        <fullName evidence="6">Apicidin F synthesis protein 7</fullName>
    </alternativeName>
</protein>
<name>APF7_GIBF5</name>
<feature type="chain" id="PRO_0000437162" description="Cytochrome P450 monooxygenase apf7">
    <location>
        <begin position="1"/>
        <end position="530"/>
    </location>
</feature>
<feature type="transmembrane region" description="Helical" evidence="2">
    <location>
        <begin position="6"/>
        <end position="26"/>
    </location>
</feature>
<feature type="binding site" description="axial binding residue" evidence="1">
    <location>
        <position position="464"/>
    </location>
    <ligand>
        <name>heme</name>
        <dbReference type="ChEBI" id="CHEBI:30413"/>
    </ligand>
    <ligandPart>
        <name>Fe</name>
        <dbReference type="ChEBI" id="CHEBI:18248"/>
    </ligandPart>
</feature>
<feature type="glycosylation site" description="N-linked (GlcNAc...) asparagine" evidence="3">
    <location>
        <position position="85"/>
    </location>
</feature>
<evidence type="ECO:0000250" key="1">
    <source>
        <dbReference type="UniProtKB" id="P04798"/>
    </source>
</evidence>
<evidence type="ECO:0000255" key="2"/>
<evidence type="ECO:0000255" key="3">
    <source>
        <dbReference type="PROSITE-ProRule" id="PRU00498"/>
    </source>
</evidence>
<evidence type="ECO:0000269" key="4">
    <source>
    </source>
</evidence>
<evidence type="ECO:0000269" key="5">
    <source>
    </source>
</evidence>
<evidence type="ECO:0000303" key="6">
    <source>
    </source>
</evidence>
<evidence type="ECO:0000305" key="7"/>
<evidence type="ECO:0000305" key="8">
    <source>
    </source>
</evidence>
<comment type="function">
    <text evidence="4 5">Cytochrome P450 monooxygenase; part of the gene cluster that mediates the biosynthesis of the cyclic tetrapeptide apicidin F (APF) (PubMed:25058475). The non-ribosomal peptide synthetase apf1 incorporates four different amino acids to produce apicidin F: L-phenylalanine, D-pipecolic acid (D-pip), N-methoxy-L-tryptophan and L-2-aminooctanedioic acid (PubMed:25058475). L-Phenylalanine is the only proteinogenic amino acid directly used by apf1 (PubMed:24195442, PubMed:25058475). The 3 other apf1 substrates are non-proteinogenic and have to be modified by other enzymes of the cluster (PubMed:25058475). Lysine is converted to delta-1-pyrroline-5-carboxylate (P5C) which is reduced to L-pipecolic acid (L-pip) by apf3 (PubMed:25058475). L-pip is epimerized to D-pip, probably by apf1 activity, prior to incorporation (PubMed:25058475). L-Tryptophan is N-oxidyzed by one of the cytochrome P450 monooxygenases (apf7 or apf8), and further methylated at the hydroxy group by the O-methyltransferase apf6 to yield N-methoxy-L-tryptophan (PubMed:25058475). The synthesis of the fourth apf1 substrate is more complex (PubMed:25058475). The fatty acid synthase apf5 is involved in the synthesis of the octanoic acid backbone of L-2-aminooctanedioic acid by fixing one acetyl-CoA unit and three malonyl-CoA units (PubMed:25058475). Then one of the cytochrome P450 monooxygenases (apf7 or apf8) may oxidize this backbone to 2-oxooctanoic acid (PubMed:25058475). The aminotransferase apf4 is predicted to catalyze the exchange of the keto group with an amino group (PubMed:25058475). The next step would be the oxidation of 2-aminooctanoic acid by one of the cytochrome P450 monooxygenases (apf7 or apf8). The last step is the oxidation of 2-amino-8-hydroxyoctanoic acid to 2-aminooctanedioic acid is catalyzed by the FAD-dependent monooxygenase apf9 (PubMed:25058475).</text>
</comment>
<comment type="cofactor">
    <cofactor evidence="1">
        <name>heme</name>
        <dbReference type="ChEBI" id="CHEBI:30413"/>
    </cofactor>
</comment>
<comment type="pathway">
    <text evidence="5">Secondary metabolite biosynthesis.</text>
</comment>
<comment type="subcellular location">
    <subcellularLocation>
        <location evidence="2">Membrane</location>
        <topology evidence="2">Single-pass membrane protein</topology>
    </subcellularLocation>
</comment>
<comment type="induction">
    <text evidence="5">Expression is positively regulated by the apicidin F cluster-specific transcription factor apf2 that binds to the eight-base-pair motif 5'-TGACGTGA-3' called the 'Api-box' that is found in all promoters of the apicidin F cluster except in the promoter region of apf2 itself (PubMed:25058475).</text>
</comment>
<comment type="biotechnology">
    <text evidence="4">Apicidin F, like the other known apicidins, is a cyclic tetrapeptides with anti-malarial properties via histone deacetylase inhibitory activity (PubMed:24195442).</text>
</comment>
<comment type="similarity">
    <text evidence="7">Belongs to the cytochrome P450 family.</text>
</comment>
<dbReference type="EC" id="1.-.-.-" evidence="8"/>
<dbReference type="EMBL" id="HF679023">
    <property type="protein sequence ID" value="CCT63357.1"/>
    <property type="molecule type" value="Genomic_DNA"/>
</dbReference>
<dbReference type="SMR" id="S0DPM1"/>
<dbReference type="STRING" id="1279085.S0DPM1"/>
<dbReference type="GlyCosmos" id="S0DPM1">
    <property type="glycosylation" value="1 site, No reported glycans"/>
</dbReference>
<dbReference type="EnsemblFungi" id="CCT63357">
    <property type="protein sequence ID" value="CCT63357"/>
    <property type="gene ID" value="FFUJ_00007"/>
</dbReference>
<dbReference type="VEuPathDB" id="FungiDB:FFUJ_00007"/>
<dbReference type="HOGENOM" id="CLU_001570_14_11_1"/>
<dbReference type="Proteomes" id="UP000016800">
    <property type="component" value="Chromosome 1"/>
</dbReference>
<dbReference type="GO" id="GO:0016020">
    <property type="term" value="C:membrane"/>
    <property type="evidence" value="ECO:0007669"/>
    <property type="project" value="UniProtKB-SubCell"/>
</dbReference>
<dbReference type="GO" id="GO:0020037">
    <property type="term" value="F:heme binding"/>
    <property type="evidence" value="ECO:0007669"/>
    <property type="project" value="InterPro"/>
</dbReference>
<dbReference type="GO" id="GO:0005506">
    <property type="term" value="F:iron ion binding"/>
    <property type="evidence" value="ECO:0007669"/>
    <property type="project" value="InterPro"/>
</dbReference>
<dbReference type="GO" id="GO:0004497">
    <property type="term" value="F:monooxygenase activity"/>
    <property type="evidence" value="ECO:0007669"/>
    <property type="project" value="UniProtKB-KW"/>
</dbReference>
<dbReference type="GO" id="GO:0016705">
    <property type="term" value="F:oxidoreductase activity, acting on paired donors, with incorporation or reduction of molecular oxygen"/>
    <property type="evidence" value="ECO:0007669"/>
    <property type="project" value="InterPro"/>
</dbReference>
<dbReference type="CDD" id="cd11061">
    <property type="entry name" value="CYP67-like"/>
    <property type="match status" value="1"/>
</dbReference>
<dbReference type="FunFam" id="1.10.630.10:FF:000063">
    <property type="entry name" value="Cytochrome P450 monooxygenase"/>
    <property type="match status" value="1"/>
</dbReference>
<dbReference type="Gene3D" id="1.10.630.10">
    <property type="entry name" value="Cytochrome P450"/>
    <property type="match status" value="1"/>
</dbReference>
<dbReference type="InterPro" id="IPR001128">
    <property type="entry name" value="Cyt_P450"/>
</dbReference>
<dbReference type="InterPro" id="IPR017972">
    <property type="entry name" value="Cyt_P450_CS"/>
</dbReference>
<dbReference type="InterPro" id="IPR002401">
    <property type="entry name" value="Cyt_P450_E_grp-I"/>
</dbReference>
<dbReference type="InterPro" id="IPR036396">
    <property type="entry name" value="Cyt_P450_sf"/>
</dbReference>
<dbReference type="InterPro" id="IPR050121">
    <property type="entry name" value="Cytochrome_P450_monoxygenase"/>
</dbReference>
<dbReference type="PANTHER" id="PTHR24305">
    <property type="entry name" value="CYTOCHROME P450"/>
    <property type="match status" value="1"/>
</dbReference>
<dbReference type="PANTHER" id="PTHR24305:SF237">
    <property type="entry name" value="CYTOCHROME P450 MONOOXYGENASE ATNE-RELATED"/>
    <property type="match status" value="1"/>
</dbReference>
<dbReference type="Pfam" id="PF00067">
    <property type="entry name" value="p450"/>
    <property type="match status" value="1"/>
</dbReference>
<dbReference type="PRINTS" id="PR00463">
    <property type="entry name" value="EP450I"/>
</dbReference>
<dbReference type="PRINTS" id="PR00385">
    <property type="entry name" value="P450"/>
</dbReference>
<dbReference type="SUPFAM" id="SSF48264">
    <property type="entry name" value="Cytochrome P450"/>
    <property type="match status" value="1"/>
</dbReference>
<dbReference type="PROSITE" id="PS00086">
    <property type="entry name" value="CYTOCHROME_P450"/>
    <property type="match status" value="1"/>
</dbReference>
<reference key="1">
    <citation type="journal article" date="2013" name="PLoS Pathog.">
        <title>Deciphering the cryptic genome: genome-wide analyses of the rice pathogen Fusarium fujikuroi reveal complex regulation of secondary metabolism and novel metabolites.</title>
        <authorList>
            <person name="Wiemann P."/>
            <person name="Sieber C.M.K."/>
            <person name="von Bargen K.W."/>
            <person name="Studt L."/>
            <person name="Niehaus E.-M."/>
            <person name="Espino J.J."/>
            <person name="Huss K."/>
            <person name="Michielse C.B."/>
            <person name="Albermann S."/>
            <person name="Wagner D."/>
            <person name="Bergner S.V."/>
            <person name="Connolly L.R."/>
            <person name="Fischer A."/>
            <person name="Reuter G."/>
            <person name="Kleigrewe K."/>
            <person name="Bald T."/>
            <person name="Wingfield B.D."/>
            <person name="Ophir R."/>
            <person name="Freeman S."/>
            <person name="Hippler M."/>
            <person name="Smith K.M."/>
            <person name="Brown D.W."/>
            <person name="Proctor R.H."/>
            <person name="Muensterkoetter M."/>
            <person name="Freitag M."/>
            <person name="Humpf H.-U."/>
            <person name="Gueldener U."/>
            <person name="Tudzynski B."/>
        </authorList>
    </citation>
    <scope>NUCLEOTIDE SEQUENCE [LARGE SCALE GENOMIC DNA]</scope>
    <source>
        <strain>CBS 195.34 / IMI 58289 / NRRL A-6831</strain>
    </source>
</reference>
<reference key="2">
    <citation type="journal article" date="2013" name="J. Nat. Prod.">
        <title>Structure elucidation and antimalarial activity of apicidin F: an apicidin-like compound produced by Fusarium fujikuroi.</title>
        <authorList>
            <person name="von Bargen K.W."/>
            <person name="Niehaus E.M."/>
            <person name="Bergander K."/>
            <person name="Brun R."/>
            <person name="Tudzynski B."/>
            <person name="Humpf H.U."/>
        </authorList>
    </citation>
    <scope>FUNCTION</scope>
    <scope>BIOTECHNOLOGY</scope>
</reference>
<reference key="3">
    <citation type="journal article" date="2014" name="PLoS ONE">
        <title>Apicidin F: characterization and genetic manipulation of a new secondary metabolite gene cluster in the rice pathogen Fusarium fujikuroi.</title>
        <authorList>
            <person name="Niehaus E.M."/>
            <person name="Janevska S."/>
            <person name="von Bargen K.W."/>
            <person name="Sieber C.M."/>
            <person name="Harrer H."/>
            <person name="Humpf H.U."/>
            <person name="Tudzynski B."/>
        </authorList>
    </citation>
    <scope>FUNCTION</scope>
    <scope>INDUCTION</scope>
</reference>
<proteinExistence type="evidence at protein level"/>
<sequence length="530" mass="60226">MILFSVSPVSIWVFVIYAVTIIIAIYRLFFHPYAKYPGPFLAKLTSWYSIYHTYYGDLHIDIWECHNKYELGNYVRYGPNRILVNTSEGLNAIYSQGKNTQKAKAYRKVSLVPGVHPTFSMIDNQGHAKLRRLVGQGLSNAHIRMYDQELRQSALLFASRLGEEIDRFEPNQPHGNHDGWTSPKNVASWSNYFTFDVMSHLVYGTSYDLLTDSENHWVIEGVLGQMRRISFLTMLPELEDMRFDRILFPDARRKAYRFSAKSREILEARKSKSEEMRHQDAKVDVFLRLLSAKDPETGESLSDKQLWAESNLLIIAGSDTSSTGLAASFFYLSRNPSAYDRVKQEVRSALTTSEDISQGPKLLSCTYLRACVLESLRLSPPLGGAMWRQTMPGGLFIAGSDHDFHIPGGCEVGTGVYAIHHNEEYYPEPFRFRPERWLPQEVGDEAVAKAQSAFQAFSLGPRSCPGKNLAMLEIPFALAAVMMDYDFRKVDSPLGGVGEGKGKFVGQYQTFWAFTSIKDGPYIQFKRREP</sequence>
<gene>
    <name evidence="6" type="primary">apf7</name>
    <name type="ORF">FFUJ_00007</name>
</gene>
<accession>S0DPM1</accession>
<organism>
    <name type="scientific">Gibberella fujikuroi (strain CBS 195.34 / IMI 58289 / NRRL A-6831)</name>
    <name type="common">Bakanae and foot rot disease fungus</name>
    <name type="synonym">Fusarium fujikuroi</name>
    <dbReference type="NCBI Taxonomy" id="1279085"/>
    <lineage>
        <taxon>Eukaryota</taxon>
        <taxon>Fungi</taxon>
        <taxon>Dikarya</taxon>
        <taxon>Ascomycota</taxon>
        <taxon>Pezizomycotina</taxon>
        <taxon>Sordariomycetes</taxon>
        <taxon>Hypocreomycetidae</taxon>
        <taxon>Hypocreales</taxon>
        <taxon>Nectriaceae</taxon>
        <taxon>Fusarium</taxon>
        <taxon>Fusarium fujikuroi species complex</taxon>
    </lineage>
</organism>
<keyword id="KW-0325">Glycoprotein</keyword>
<keyword id="KW-0349">Heme</keyword>
<keyword id="KW-0408">Iron</keyword>
<keyword id="KW-0472">Membrane</keyword>
<keyword id="KW-0479">Metal-binding</keyword>
<keyword id="KW-0503">Monooxygenase</keyword>
<keyword id="KW-0560">Oxidoreductase</keyword>
<keyword id="KW-1185">Reference proteome</keyword>
<keyword id="KW-0812">Transmembrane</keyword>
<keyword id="KW-1133">Transmembrane helix</keyword>